<feature type="chain" id="PRO_0000129445" description="Large ribosomal subunit protein uL23c">
    <location>
        <begin position="1"/>
        <end position="98"/>
    </location>
</feature>
<gene>
    <name type="primary">rpl23</name>
</gene>
<dbReference type="EMBL" id="AJ294725">
    <property type="protein sequence ID" value="CAC24593.1"/>
    <property type="molecule type" value="Genomic_DNA"/>
</dbReference>
<dbReference type="PIR" id="S38604">
    <property type="entry name" value="S38604"/>
</dbReference>
<dbReference type="RefSeq" id="NP_074982.1">
    <property type="nucleotide sequence ID" value="NC_002652.1"/>
</dbReference>
<dbReference type="SMR" id="P34771"/>
<dbReference type="GeneID" id="802541"/>
<dbReference type="GO" id="GO:0009536">
    <property type="term" value="C:plastid"/>
    <property type="evidence" value="ECO:0007669"/>
    <property type="project" value="UniProtKB-SubCell"/>
</dbReference>
<dbReference type="GO" id="GO:1990904">
    <property type="term" value="C:ribonucleoprotein complex"/>
    <property type="evidence" value="ECO:0007669"/>
    <property type="project" value="UniProtKB-KW"/>
</dbReference>
<dbReference type="GO" id="GO:0005840">
    <property type="term" value="C:ribosome"/>
    <property type="evidence" value="ECO:0007669"/>
    <property type="project" value="UniProtKB-KW"/>
</dbReference>
<dbReference type="GO" id="GO:0019843">
    <property type="term" value="F:rRNA binding"/>
    <property type="evidence" value="ECO:0007669"/>
    <property type="project" value="UniProtKB-KW"/>
</dbReference>
<dbReference type="GO" id="GO:0003735">
    <property type="term" value="F:structural constituent of ribosome"/>
    <property type="evidence" value="ECO:0007669"/>
    <property type="project" value="InterPro"/>
</dbReference>
<dbReference type="GO" id="GO:0006412">
    <property type="term" value="P:translation"/>
    <property type="evidence" value="ECO:0007669"/>
    <property type="project" value="InterPro"/>
</dbReference>
<dbReference type="Gene3D" id="3.30.70.330">
    <property type="match status" value="1"/>
</dbReference>
<dbReference type="HAMAP" id="MF_01369_B">
    <property type="entry name" value="Ribosomal_uL23_B"/>
    <property type="match status" value="1"/>
</dbReference>
<dbReference type="InterPro" id="IPR012677">
    <property type="entry name" value="Nucleotide-bd_a/b_plait_sf"/>
</dbReference>
<dbReference type="InterPro" id="IPR013025">
    <property type="entry name" value="Ribosomal_uL23-like"/>
</dbReference>
<dbReference type="InterPro" id="IPR012678">
    <property type="entry name" value="Ribosomal_uL23/eL15/eS24_sf"/>
</dbReference>
<dbReference type="InterPro" id="IPR001014">
    <property type="entry name" value="Ribosomal_uL23_CS"/>
</dbReference>
<dbReference type="Pfam" id="PF00276">
    <property type="entry name" value="Ribosomal_L23"/>
    <property type="match status" value="1"/>
</dbReference>
<dbReference type="SUPFAM" id="SSF54189">
    <property type="entry name" value="Ribosomal proteins S24e, L23 and L15e"/>
    <property type="match status" value="1"/>
</dbReference>
<dbReference type="PROSITE" id="PS00050">
    <property type="entry name" value="RIBOSOMAL_L23"/>
    <property type="match status" value="1"/>
</dbReference>
<reference key="1">
    <citation type="journal article" date="1994" name="Plant Physiol.">
        <title>Plastid ribosomal protein genes from the nonphotosynthetic flagellate Astasia longa.</title>
        <authorList>
            <person name="Gockel G."/>
            <person name="Baier S."/>
            <person name="Hachtel W."/>
        </authorList>
    </citation>
    <scope>NUCLEOTIDE SEQUENCE [GENOMIC DNA]</scope>
    <source>
        <strain>CCAP 1204-17a</strain>
    </source>
</reference>
<reference key="2">
    <citation type="journal article" date="2000" name="Protist">
        <title>Complete gene map of the plastid genome of the nonphotosynthetic euglenoid flagellate Astasia longa.</title>
        <authorList>
            <person name="Gockel G."/>
            <person name="Hachtel W."/>
        </authorList>
    </citation>
    <scope>NUCLEOTIDE SEQUENCE [LARGE SCALE GENOMIC DNA]</scope>
    <source>
        <strain>CCAP 1204-17a</strain>
    </source>
</reference>
<evidence type="ECO:0000250" key="1"/>
<evidence type="ECO:0000305" key="2"/>
<keyword id="KW-0934">Plastid</keyword>
<keyword id="KW-0687">Ribonucleoprotein</keyword>
<keyword id="KW-0689">Ribosomal protein</keyword>
<keyword id="KW-0694">RNA-binding</keyword>
<keyword id="KW-0699">rRNA-binding</keyword>
<name>RK23_EUGLO</name>
<comment type="function">
    <text evidence="1">Binds to 23S rRNA.</text>
</comment>
<comment type="subunit">
    <text evidence="1">Part of the 50S ribosomal subunit.</text>
</comment>
<comment type="subcellular location">
    <subcellularLocation>
        <location>Plastid</location>
    </subcellularLocation>
</comment>
<comment type="similarity">
    <text evidence="2">Belongs to the universal ribosomal protein uL23 family.</text>
</comment>
<organism>
    <name type="scientific">Euglena longa</name>
    <name type="common">Euglenophycean alga</name>
    <name type="synonym">Astasia longa</name>
    <dbReference type="NCBI Taxonomy" id="3037"/>
    <lineage>
        <taxon>Eukaryota</taxon>
        <taxon>Discoba</taxon>
        <taxon>Euglenozoa</taxon>
        <taxon>Euglenida</taxon>
        <taxon>Spirocuta</taxon>
        <taxon>Euglenophyceae</taxon>
        <taxon>Euglenales</taxon>
        <taxon>Euglenaceae</taxon>
        <taxon>Euglena</taxon>
    </lineage>
</organism>
<accession>P34771</accession>
<protein>
    <recommendedName>
        <fullName evidence="2">Large ribosomal subunit protein uL23c</fullName>
    </recommendedName>
    <alternativeName>
        <fullName>50S ribosomal protein L23, plastid</fullName>
    </alternativeName>
</protein>
<sequence>MLNFVRIFLPFLKYQVFTDKTNDLLKYNIYVFDVDKKLNKLQIKNIIEYIFNIKIYSINTYIKNNKYCCFNKIKGLKTNYKRAFIRLKSVNIIPYFSC</sequence>
<geneLocation type="non-photosynthetic plastid"/>
<proteinExistence type="inferred from homology"/>